<comment type="function">
    <text evidence="1 7 9 10 11 12 13 14 17">E3 ubiquitin-protein ligase that mediates ubiquitination and subsequent proteasomal degradation of target proteins (PubMed:11257006, PubMed:14645235, PubMed:14645526, PubMed:17003045, PubMed:24809345, PubMed:26070566, PubMed:9637679). E3 ubiquitin ligases accept ubiquitin from an E2 ubiquitin-conjugating enzyme in the form of a thioester and then directly transfers the ubiquitin to targeted substrates (PubMed:11257006, PubMed:14645235, PubMed:14645526, PubMed:17003045, PubMed:26070566, PubMed:9637679). Mediates E3 ubiquitin ligase activity either through direct binding to substrates or by functioning as the essential RING domain subunit of larger E3 complexes (PubMed:11257006, PubMed:14645235, PubMed:14645526, PubMed:17003045, PubMed:26070566, PubMed:9637679). Mediates ubiquitination and proteasomal degradation of DYRK2 in response to hypoxia. Promotes monoubiquitination of SNCA (By similarity). Triggers the ubiquitin-mediated degradation of many substrates, including proteins involved in transcription regulation (GPS2, POU2AF1, PML, NCOR1), a cell surface receptor (DCC), an antiapoptotic protein (BAG1), and a protein involved in synaptic vesicle function in neurons (SYP) (PubMed:11257006, PubMed:14645235, PubMed:14645526, PubMed:17003045, PubMed:26070566, PubMed:9637679). It is thereby involved in apoptosis, tumor suppression, cell cycle, transcription and signaling processes (PubMed:11257006, PubMed:14645235, PubMed:14645526, PubMed:17003045, PubMed:26070566, PubMed:9637679). Has some overlapping function with SIAH1. Triggers the ubiquitin-mediated degradation of TRAF2, whereas SIAH1 does not. Regulates cellular clock function via ubiquitination of the circadian transcriptional repressors NR1D1 and NR1D2 leading to their proteasomal degradation (By similarity). Plays an important role in mediating the rhythmic degradation/clearance of NR1D1 and NR1D2 contributing to their circadian profile of protein abundance (PubMed:26392558). Mediates ubiquitination and degradation of EGLN2 and EGLN3 in response to the unfolded protein response (UPR), leading to their degradation and subsequent stabilization of ATF4 (PubMed:24809345). Also part of the Wnt signaling pathway in which it mediates the Wnt-induced ubiquitin-mediated proteasomal degradation of AXIN1 (By similarity).</text>
</comment>
<comment type="catalytic activity">
    <reaction evidence="13">
        <text>S-ubiquitinyl-[E2 ubiquitin-conjugating enzyme]-L-cysteine + [acceptor protein]-L-lysine = [E2 ubiquitin-conjugating enzyme]-L-cysteine + N(6)-ubiquitinyl-[acceptor protein]-L-lysine.</text>
        <dbReference type="EC" id="2.3.2.27"/>
    </reaction>
</comment>
<comment type="pathway">
    <text>Protein modification; protein ubiquitination.</text>
</comment>
<comment type="subunit">
    <text evidence="1 6">Homodimer (By similarity). Interacts with UBE2E2 (By similarity). Interacts with VAV1, without mediating its ubiquitin-mediated degradation (By similarity). Interacts with CACYBP/SIP (By similarity). Probable component of some large E3 complex possibly composed of UBE2D1, SIAH2, CACYBP/SIP, SKP1, APC and TBL1X (By similarity). Interacts with UBE2I (By similarity). Interacts with PEG10, which may inhibit its activity (By similarity). Interacts with EGLN2 and SNCAIP (By similarity). Interacts with DYRK2 (By similarity). Interacts with PEG3 (PubMed:10681424). Interacts with NR1D1 and NR1D2 (By similarity). Interacts with DCC (By similarity). Interacts with AXIN1.</text>
</comment>
<comment type="interaction">
    <interactant intactId="EBI-957413">
        <id>Q06986</id>
    </interactant>
    <interactant intactId="EBI-7838029">
        <id>O08715</id>
        <label>Akap1</label>
    </interactant>
    <organismsDiffer>false</organismsDiffer>
    <experiments>6</experiments>
</comment>
<comment type="interaction">
    <interactant intactId="EBI-957413">
        <id>Q06986</id>
    </interactant>
    <interactant intactId="EBI-608057">
        <id>P10275</id>
        <label>AR</label>
    </interactant>
    <organismsDiffer>true</organismsDiffer>
    <experiments>6</experiments>
</comment>
<comment type="subcellular location">
    <subcellularLocation>
        <location evidence="1">Cytoplasm</location>
    </subcellularLocation>
    <subcellularLocation>
        <location evidence="1">Nucleus</location>
    </subcellularLocation>
    <text evidence="1">Predominantly cytoplasmic. Partially nuclear.</text>
</comment>
<comment type="tissue specificity">
    <text evidence="15 16">Widely expressed at low level in embryos and adults. Expressed in a specific population of germ cells within both the mouse ovary and testis. Absent in primordial oocytes but expressed in all growing oocytes, coincident with their recruitment from the pool of quiescent cells. Its level of expression increases as the oocytes mature. Expressed in Graafian follicles and in fertilized zygotes up until the two cell stage, a time of extensive maternal transcript degradation and zygotic gene activation. Expressed in the testis from postmeiotic spermatids.</text>
</comment>
<comment type="induction">
    <text evidence="8 12">May be induced by p53/TP53, suggesting that it may be required to modulate p53/TP53 response (PubMed:12417719). The relevance of such activity in vivo is however unclear and may not exist (PubMed:12417719). Induced by ATF4 in response to the unfolded protein response (UPR) (PubMed:24809345).</text>
</comment>
<comment type="domain">
    <text>The RING-type zinc finger domain is essential for ubiquitin ligase activity.</text>
</comment>
<comment type="domain">
    <text evidence="2">The SBD domain (substrate-binding domain) mediates the homodimerization and the interaction with substrate proteins. It is related to the TRAF family.</text>
</comment>
<comment type="PTM">
    <text evidence="1 11">Phosphorylated at Ser-29 by DYRK2; this increases the ubiquitin ligase activity and promotes degradation of EGLN3 (By similarity). Phosphorylated at Thr-24 and Ser-29 by MAPK14, which mediates the degradation by the proteasome of EGLN3.</text>
</comment>
<comment type="similarity">
    <text evidence="18">Belongs to the SINA (Seven in absentia) family.</text>
</comment>
<proteinExistence type="evidence at protein level"/>
<dbReference type="EC" id="2.3.2.27" evidence="13"/>
<dbReference type="EMBL" id="Z19581">
    <property type="protein sequence ID" value="CAA79632.1"/>
    <property type="molecule type" value="mRNA"/>
</dbReference>
<dbReference type="EMBL" id="BC058400">
    <property type="protein sequence ID" value="AAH58400.1"/>
    <property type="molecule type" value="mRNA"/>
</dbReference>
<dbReference type="CCDS" id="CCDS17368.1"/>
<dbReference type="PIR" id="I48765">
    <property type="entry name" value="I48765"/>
</dbReference>
<dbReference type="RefSeq" id="NP_033200.2">
    <property type="nucleotide sequence ID" value="NM_009174.3"/>
</dbReference>
<dbReference type="SMR" id="Q06986"/>
<dbReference type="BioGRID" id="203233">
    <property type="interactions" value="9"/>
</dbReference>
<dbReference type="FunCoup" id="Q06986">
    <property type="interactions" value="2324"/>
</dbReference>
<dbReference type="IntAct" id="Q06986">
    <property type="interactions" value="5"/>
</dbReference>
<dbReference type="MINT" id="Q06986"/>
<dbReference type="STRING" id="10090.ENSMUSP00000067496"/>
<dbReference type="iPTMnet" id="Q06986"/>
<dbReference type="PhosphoSitePlus" id="Q06986"/>
<dbReference type="PaxDb" id="10090-ENSMUSP00000067496"/>
<dbReference type="PeptideAtlas" id="Q06986"/>
<dbReference type="ProteomicsDB" id="261037"/>
<dbReference type="Antibodypedia" id="33601">
    <property type="antibodies" value="237 antibodies from 29 providers"/>
</dbReference>
<dbReference type="DNASU" id="20439"/>
<dbReference type="Ensembl" id="ENSMUST00000070368.8">
    <property type="protein sequence ID" value="ENSMUSP00000067496.8"/>
    <property type="gene ID" value="ENSMUSG00000036432.9"/>
</dbReference>
<dbReference type="GeneID" id="20439"/>
<dbReference type="KEGG" id="mmu:20439"/>
<dbReference type="UCSC" id="uc008pia.1">
    <property type="organism name" value="mouse"/>
</dbReference>
<dbReference type="AGR" id="MGI:108062"/>
<dbReference type="CTD" id="6478"/>
<dbReference type="MGI" id="MGI:108062">
    <property type="gene designation" value="Siah2"/>
</dbReference>
<dbReference type="VEuPathDB" id="HostDB:ENSMUSG00000036432"/>
<dbReference type="eggNOG" id="KOG3002">
    <property type="taxonomic scope" value="Eukaryota"/>
</dbReference>
<dbReference type="GeneTree" id="ENSGT00940000159812"/>
<dbReference type="HOGENOM" id="CLU_028215_0_0_1"/>
<dbReference type="InParanoid" id="Q06986"/>
<dbReference type="OMA" id="AGHLVCK"/>
<dbReference type="OrthoDB" id="941555at2759"/>
<dbReference type="PhylomeDB" id="Q06986"/>
<dbReference type="TreeFam" id="TF312976"/>
<dbReference type="Reactome" id="R-MMU-5689880">
    <property type="pathway name" value="Ub-specific processing proteases"/>
</dbReference>
<dbReference type="Reactome" id="R-MMU-983168">
    <property type="pathway name" value="Antigen processing: Ubiquitination &amp; Proteasome degradation"/>
</dbReference>
<dbReference type="UniPathway" id="UPA00143"/>
<dbReference type="BioGRID-ORCS" id="20439">
    <property type="hits" value="2 hits in 78 CRISPR screens"/>
</dbReference>
<dbReference type="ChiTaRS" id="Siah2">
    <property type="organism name" value="mouse"/>
</dbReference>
<dbReference type="PRO" id="PR:Q06986"/>
<dbReference type="Proteomes" id="UP000000589">
    <property type="component" value="Chromosome 3"/>
</dbReference>
<dbReference type="RNAct" id="Q06986">
    <property type="molecule type" value="protein"/>
</dbReference>
<dbReference type="Bgee" id="ENSMUSG00000036432">
    <property type="expression patterns" value="Expressed in secondary oocyte and 248 other cell types or tissues"/>
</dbReference>
<dbReference type="ExpressionAtlas" id="Q06986">
    <property type="expression patterns" value="baseline and differential"/>
</dbReference>
<dbReference type="GO" id="GO:0005829">
    <property type="term" value="C:cytosol"/>
    <property type="evidence" value="ECO:0007669"/>
    <property type="project" value="Ensembl"/>
</dbReference>
<dbReference type="GO" id="GO:0005769">
    <property type="term" value="C:early endosome"/>
    <property type="evidence" value="ECO:0007669"/>
    <property type="project" value="Ensembl"/>
</dbReference>
<dbReference type="GO" id="GO:0043025">
    <property type="term" value="C:neuronal cell body"/>
    <property type="evidence" value="ECO:0007669"/>
    <property type="project" value="Ensembl"/>
</dbReference>
<dbReference type="GO" id="GO:0005654">
    <property type="term" value="C:nucleoplasm"/>
    <property type="evidence" value="ECO:0007669"/>
    <property type="project" value="Ensembl"/>
</dbReference>
<dbReference type="GO" id="GO:0031624">
    <property type="term" value="F:ubiquitin conjugating enzyme binding"/>
    <property type="evidence" value="ECO:0007669"/>
    <property type="project" value="Ensembl"/>
</dbReference>
<dbReference type="GO" id="GO:0061630">
    <property type="term" value="F:ubiquitin protein ligase activity"/>
    <property type="evidence" value="ECO:0000315"/>
    <property type="project" value="UniProtKB"/>
</dbReference>
<dbReference type="GO" id="GO:0004842">
    <property type="term" value="F:ubiquitin-protein transferase activity"/>
    <property type="evidence" value="ECO:0000314"/>
    <property type="project" value="UniProtKB"/>
</dbReference>
<dbReference type="GO" id="GO:0008270">
    <property type="term" value="F:zinc ion binding"/>
    <property type="evidence" value="ECO:0007669"/>
    <property type="project" value="UniProtKB-KW"/>
</dbReference>
<dbReference type="GO" id="GO:0006915">
    <property type="term" value="P:apoptotic process"/>
    <property type="evidence" value="ECO:0007669"/>
    <property type="project" value="UniProtKB-KW"/>
</dbReference>
<dbReference type="GO" id="GO:0060070">
    <property type="term" value="P:canonical Wnt signaling pathway"/>
    <property type="evidence" value="ECO:0007669"/>
    <property type="project" value="Ensembl"/>
</dbReference>
<dbReference type="GO" id="GO:0090090">
    <property type="term" value="P:negative regulation of canonical Wnt signaling pathway"/>
    <property type="evidence" value="ECO:0000266"/>
    <property type="project" value="MGI"/>
</dbReference>
<dbReference type="GO" id="GO:2001237">
    <property type="term" value="P:negative regulation of extrinsic apoptotic signaling pathway"/>
    <property type="evidence" value="ECO:0007669"/>
    <property type="project" value="Ensembl"/>
</dbReference>
<dbReference type="GO" id="GO:0030163">
    <property type="term" value="P:protein catabolic process"/>
    <property type="evidence" value="ECO:0000266"/>
    <property type="project" value="MGI"/>
</dbReference>
<dbReference type="GO" id="GO:0016567">
    <property type="term" value="P:protein ubiquitination"/>
    <property type="evidence" value="ECO:0007669"/>
    <property type="project" value="UniProtKB-UniPathway"/>
</dbReference>
<dbReference type="GO" id="GO:0042752">
    <property type="term" value="P:regulation of circadian rhythm"/>
    <property type="evidence" value="ECO:0000315"/>
    <property type="project" value="UniProtKB"/>
</dbReference>
<dbReference type="GO" id="GO:0031396">
    <property type="term" value="P:regulation of protein ubiquitination"/>
    <property type="evidence" value="ECO:0007669"/>
    <property type="project" value="Ensembl"/>
</dbReference>
<dbReference type="GO" id="GO:0048511">
    <property type="term" value="P:rhythmic process"/>
    <property type="evidence" value="ECO:0007669"/>
    <property type="project" value="UniProtKB-KW"/>
</dbReference>
<dbReference type="GO" id="GO:0006511">
    <property type="term" value="P:ubiquitin-dependent protein catabolic process"/>
    <property type="evidence" value="ECO:0000314"/>
    <property type="project" value="UniProtKB"/>
</dbReference>
<dbReference type="CDD" id="cd16752">
    <property type="entry name" value="RING-HC_SIAH2"/>
    <property type="match status" value="1"/>
</dbReference>
<dbReference type="CDD" id="cd03829">
    <property type="entry name" value="Sina"/>
    <property type="match status" value="1"/>
</dbReference>
<dbReference type="FunFam" id="2.60.210.10:FF:000002">
    <property type="entry name" value="E3 ubiquitin-protein ligase"/>
    <property type="match status" value="1"/>
</dbReference>
<dbReference type="FunFam" id="3.30.160.60:FF:000665">
    <property type="entry name" value="E3 ubiquitin-protein ligase"/>
    <property type="match status" value="1"/>
</dbReference>
<dbReference type="FunFam" id="3.30.40.10:FF:000050">
    <property type="entry name" value="E3 ubiquitin-protein ligase"/>
    <property type="match status" value="1"/>
</dbReference>
<dbReference type="FunFam" id="3.30.40.10:FF:000063">
    <property type="entry name" value="E3 ubiquitin-protein ligase"/>
    <property type="match status" value="1"/>
</dbReference>
<dbReference type="Gene3D" id="2.60.210.10">
    <property type="entry name" value="Apoptosis, Tumor Necrosis Factor Receptor Associated Protein 2, Chain A"/>
    <property type="match status" value="1"/>
</dbReference>
<dbReference type="Gene3D" id="3.30.40.10">
    <property type="entry name" value="Zinc/RING finger domain, C3HC4 (zinc finger)"/>
    <property type="match status" value="2"/>
</dbReference>
<dbReference type="InterPro" id="IPR018121">
    <property type="entry name" value="7-in-absentia-prot_TRAF-dom"/>
</dbReference>
<dbReference type="InterPro" id="IPR004162">
    <property type="entry name" value="SINA-like_animal"/>
</dbReference>
<dbReference type="InterPro" id="IPR049548">
    <property type="entry name" value="Sina-like_RING"/>
</dbReference>
<dbReference type="InterPro" id="IPR008974">
    <property type="entry name" value="TRAF-like"/>
</dbReference>
<dbReference type="InterPro" id="IPR001841">
    <property type="entry name" value="Znf_RING"/>
</dbReference>
<dbReference type="InterPro" id="IPR013083">
    <property type="entry name" value="Znf_RING/FYVE/PHD"/>
</dbReference>
<dbReference type="InterPro" id="IPR013010">
    <property type="entry name" value="Znf_SIAH"/>
</dbReference>
<dbReference type="PANTHER" id="PTHR45877">
    <property type="entry name" value="E3 UBIQUITIN-PROTEIN LIGASE SIAH2"/>
    <property type="match status" value="1"/>
</dbReference>
<dbReference type="PANTHER" id="PTHR45877:SF4">
    <property type="entry name" value="E3 UBIQUITIN-PROTEIN LIGASE SIAH2"/>
    <property type="match status" value="1"/>
</dbReference>
<dbReference type="Pfam" id="PF21362">
    <property type="entry name" value="Sina_RING"/>
    <property type="match status" value="1"/>
</dbReference>
<dbReference type="Pfam" id="PF03145">
    <property type="entry name" value="Sina_TRAF"/>
    <property type="match status" value="1"/>
</dbReference>
<dbReference type="Pfam" id="PF21361">
    <property type="entry name" value="Sina_ZnF"/>
    <property type="match status" value="1"/>
</dbReference>
<dbReference type="SUPFAM" id="SSF57850">
    <property type="entry name" value="RING/U-box"/>
    <property type="match status" value="1"/>
</dbReference>
<dbReference type="SUPFAM" id="SSF49599">
    <property type="entry name" value="TRAF domain-like"/>
    <property type="match status" value="1"/>
</dbReference>
<dbReference type="PROSITE" id="PS50089">
    <property type="entry name" value="ZF_RING_2"/>
    <property type="match status" value="1"/>
</dbReference>
<dbReference type="PROSITE" id="PS51081">
    <property type="entry name" value="ZF_SIAH"/>
    <property type="match status" value="1"/>
</dbReference>
<keyword id="KW-0053">Apoptosis</keyword>
<keyword id="KW-0090">Biological rhythms</keyword>
<keyword id="KW-0131">Cell cycle</keyword>
<keyword id="KW-0963">Cytoplasm</keyword>
<keyword id="KW-0479">Metal-binding</keyword>
<keyword id="KW-0539">Nucleus</keyword>
<keyword id="KW-0597">Phosphoprotein</keyword>
<keyword id="KW-1185">Reference proteome</keyword>
<keyword id="KW-0808">Transferase</keyword>
<keyword id="KW-0833">Ubl conjugation pathway</keyword>
<keyword id="KW-0862">Zinc</keyword>
<keyword id="KW-0863">Zinc-finger</keyword>
<protein>
    <recommendedName>
        <fullName>E3 ubiquitin-protein ligase SIAH2</fullName>
        <ecNumber evidence="13">2.3.2.27</ecNumber>
    </recommendedName>
    <alternativeName>
        <fullName evidence="18">RING-type E3 ubiquitin transferase SIAH2</fullName>
    </alternativeName>
    <alternativeName>
        <fullName>Seven in absentia homolog 2</fullName>
        <shortName>Siah-2</shortName>
        <shortName>mSiah2</shortName>
    </alternativeName>
</protein>
<accession>Q06986</accession>
<evidence type="ECO:0000250" key="1">
    <source>
        <dbReference type="UniProtKB" id="O43255"/>
    </source>
</evidence>
<evidence type="ECO:0000250" key="2">
    <source>
        <dbReference type="UniProtKB" id="P61092"/>
    </source>
</evidence>
<evidence type="ECO:0000255" key="3">
    <source>
        <dbReference type="PROSITE-ProRule" id="PRU00175"/>
    </source>
</evidence>
<evidence type="ECO:0000255" key="4">
    <source>
        <dbReference type="PROSITE-ProRule" id="PRU00455"/>
    </source>
</evidence>
<evidence type="ECO:0000256" key="5">
    <source>
        <dbReference type="SAM" id="MobiDB-lite"/>
    </source>
</evidence>
<evidence type="ECO:0000269" key="6">
    <source>
    </source>
</evidence>
<evidence type="ECO:0000269" key="7">
    <source>
    </source>
</evidence>
<evidence type="ECO:0000269" key="8">
    <source>
    </source>
</evidence>
<evidence type="ECO:0000269" key="9">
    <source>
    </source>
</evidence>
<evidence type="ECO:0000269" key="10">
    <source>
    </source>
</evidence>
<evidence type="ECO:0000269" key="11">
    <source>
    </source>
</evidence>
<evidence type="ECO:0000269" key="12">
    <source>
    </source>
</evidence>
<evidence type="ECO:0000269" key="13">
    <source>
    </source>
</evidence>
<evidence type="ECO:0000269" key="14">
    <source>
    </source>
</evidence>
<evidence type="ECO:0000269" key="15">
    <source>
    </source>
</evidence>
<evidence type="ECO:0000269" key="16">
    <source>
    </source>
</evidence>
<evidence type="ECO:0000269" key="17">
    <source>
    </source>
</evidence>
<evidence type="ECO:0000305" key="18"/>
<gene>
    <name type="primary">Siah2</name>
</gene>
<feature type="chain" id="PRO_0000056169" description="E3 ubiquitin-protein ligase SIAH2">
    <location>
        <begin position="1"/>
        <end position="325"/>
    </location>
</feature>
<feature type="zinc finger region" description="RING-type" evidence="3">
    <location>
        <begin position="81"/>
        <end position="116"/>
    </location>
</feature>
<feature type="zinc finger region" description="SIAH-type" evidence="4">
    <location>
        <begin position="134"/>
        <end position="194"/>
    </location>
</feature>
<feature type="region of interest" description="Disordered" evidence="5">
    <location>
        <begin position="1"/>
        <end position="43"/>
    </location>
</feature>
<feature type="region of interest" description="SBD" evidence="2">
    <location>
        <begin position="131"/>
        <end position="323"/>
    </location>
</feature>
<feature type="compositionally biased region" description="Polar residues" evidence="5">
    <location>
        <begin position="1"/>
        <end position="15"/>
    </location>
</feature>
<feature type="compositionally biased region" description="Pro residues" evidence="5">
    <location>
        <begin position="17"/>
        <end position="33"/>
    </location>
</feature>
<feature type="compositionally biased region" description="Low complexity" evidence="5">
    <location>
        <begin position="34"/>
        <end position="43"/>
    </location>
</feature>
<feature type="binding site" evidence="2">
    <location>
        <position position="139"/>
    </location>
    <ligand>
        <name>Zn(2+)</name>
        <dbReference type="ChEBI" id="CHEBI:29105"/>
        <label>1</label>
    </ligand>
</feature>
<feature type="binding site" evidence="2">
    <location>
        <position position="146"/>
    </location>
    <ligand>
        <name>Zn(2+)</name>
        <dbReference type="ChEBI" id="CHEBI:29105"/>
        <label>1</label>
    </ligand>
</feature>
<feature type="binding site" evidence="2">
    <location>
        <position position="158"/>
    </location>
    <ligand>
        <name>Zn(2+)</name>
        <dbReference type="ChEBI" id="CHEBI:29105"/>
        <label>1</label>
    </ligand>
</feature>
<feature type="binding site" evidence="2">
    <location>
        <position position="162"/>
    </location>
    <ligand>
        <name>Zn(2+)</name>
        <dbReference type="ChEBI" id="CHEBI:29105"/>
        <label>1</label>
    </ligand>
</feature>
<feature type="binding site" evidence="2">
    <location>
        <position position="169"/>
    </location>
    <ligand>
        <name>Zn(2+)</name>
        <dbReference type="ChEBI" id="CHEBI:29105"/>
        <label>2</label>
    </ligand>
</feature>
<feature type="binding site" evidence="2">
    <location>
        <position position="176"/>
    </location>
    <ligand>
        <name>Zn(2+)</name>
        <dbReference type="ChEBI" id="CHEBI:29105"/>
        <label>2</label>
    </ligand>
</feature>
<feature type="binding site" evidence="2">
    <location>
        <position position="188"/>
    </location>
    <ligand>
        <name>Zn(2+)</name>
        <dbReference type="ChEBI" id="CHEBI:29105"/>
        <label>2</label>
    </ligand>
</feature>
<feature type="binding site" evidence="2">
    <location>
        <position position="193"/>
    </location>
    <ligand>
        <name>Zn(2+)</name>
        <dbReference type="ChEBI" id="CHEBI:29105"/>
        <label>2</label>
    </ligand>
</feature>
<feature type="modified residue" description="Phosphoserine" evidence="1">
    <location>
        <position position="6"/>
    </location>
</feature>
<feature type="modified residue" description="Phosphoserine; by DYRK2" evidence="1">
    <location>
        <position position="16"/>
    </location>
</feature>
<feature type="modified residue" description="Phosphothreonine; by MAPK14" evidence="11">
    <location>
        <position position="24"/>
    </location>
</feature>
<feature type="modified residue" description="Phosphoserine; by DYRK2 and MAPK14" evidence="11">
    <location>
        <position position="29"/>
    </location>
</feature>
<feature type="modified residue" description="Phosphoserine; by DYRK2" evidence="1">
    <location>
        <position position="69"/>
    </location>
</feature>
<feature type="modified residue" description="Phosphothreonine; by DYRK2" evidence="1">
    <location>
        <position position="120"/>
    </location>
</feature>
<feature type="sequence conflict" description="In Ref. 1; CAA79632." evidence="18" ref="1">
    <original>DI</original>
    <variation>ET</variation>
    <location>
        <begin position="203"/>
        <end position="204"/>
    </location>
</feature>
<sequence length="325" mass="34758">MSRPSSTGPSANKPCSKQPPPPQTPHAPSPAAPPAAATISAAGPGSSAVPAAAAVISGPGAGGGADPVSPQHHELTSLFECPVCFDYVLPPILQCQAGHLVCNQCRQKLSCCPTCRGALTPSIRNLAMEKVASAVLFPCKYATTGCSLTLHHTEKPEHEDICEYRPYSCPCPGASCKWQGSLEAVMSHLMHAHKSITTLQGEDIVFLATDINLPGAVDWVMMQSCFGHHFMLVLEKQEKYEGHQQFFAIVLLIGTRKQAENFAYRLELNGNRRRLTWEATPRSIHDGVAAAIMNSDCLVFDTAIAHLFADNGNLGINVTISTCCQ</sequence>
<reference key="1">
    <citation type="journal article" date="1993" name="Development">
        <title>Isolation and characterisation of murine homologues of the Drosophila seven in absentia gene (sina).</title>
        <authorList>
            <person name="Della N.G."/>
            <person name="Senior P.V."/>
            <person name="Bowtell D.D.L."/>
        </authorList>
    </citation>
    <scope>NUCLEOTIDE SEQUENCE [MRNA]</scope>
    <scope>TISSUE SPECIFICITY</scope>
    <source>
        <strain>SWR/J</strain>
    </source>
</reference>
<reference key="2">
    <citation type="journal article" date="2004" name="Genome Res.">
        <title>The status, quality, and expansion of the NIH full-length cDNA project: the Mammalian Gene Collection (MGC).</title>
        <authorList>
            <consortium name="The MGC Project Team"/>
        </authorList>
    </citation>
    <scope>NUCLEOTIDE SEQUENCE [LARGE SCALE MRNA]</scope>
    <source>
        <strain>C57BL/6J</strain>
        <tissue>Brain</tissue>
    </source>
</reference>
<reference key="3">
    <citation type="journal article" date="1995" name="Cell Tissue Res.">
        <title>Expression of Siah-2, a vertebrate homologue of Drosophila sina, in germ cells of the mouse ovary and testis.</title>
        <authorList>
            <person name="Della N.G."/>
            <person name="Bowtell D.D.L."/>
            <person name="Beck F."/>
        </authorList>
    </citation>
    <scope>TISSUE SPECIFICITY</scope>
</reference>
<reference key="4">
    <citation type="journal article" date="1998" name="Genes Dev.">
        <title>Proteasomal regulation of nuclear receptor corepressor-mediated repression.</title>
        <authorList>
            <person name="Zhang J."/>
            <person name="Guenther M.G."/>
            <person name="Carthew R.W."/>
            <person name="Lazar M.A."/>
        </authorList>
    </citation>
    <scope>FUNCTION IN DEGRADATION OF NCOR1</scope>
</reference>
<reference key="5">
    <citation type="journal article" date="2000" name="Proc. Natl. Acad. Sci. U.S.A.">
        <title>Pw1/Peg3 is a potential cell death mediator and cooperates with Siah1a in p53-mediated apoptosis.</title>
        <authorList>
            <person name="Relaix F."/>
            <person name="Wei X."/>
            <person name="Li W."/>
            <person name="Pan J."/>
            <person name="Lin Y."/>
            <person name="Bowtell D.D."/>
            <person name="Sassoon D.A."/>
            <person name="Wu X."/>
        </authorList>
    </citation>
    <scope>INTERACTION WITH PEG3</scope>
</reference>
<reference key="6">
    <citation type="journal article" date="2001" name="J. Cell Sci.">
        <title>Alteration of the stability of Bag-1 protein in the control of olfactory neuronal apoptosis.</title>
        <authorList>
            <person name="Sourisseau T."/>
            <person name="Desbois C."/>
            <person name="Debure L."/>
            <person name="Bowtell D.D.L."/>
            <person name="Cato A.C.B."/>
            <person name="Schneikert J."/>
            <person name="Moyse E."/>
            <person name="Michel D."/>
        </authorList>
    </citation>
    <scope>FUNCTION IN DEGRADATION OF BAG1</scope>
</reference>
<reference key="7">
    <citation type="journal article" date="2002" name="Mol. Cell. Biol.">
        <title>Normal p53 function in primary cells deficient for Siah genes.</title>
        <authorList>
            <person name="Frew I.J."/>
            <person name="Dickins R.A."/>
            <person name="Cuddihy A.R."/>
            <person name="Del Rosario M."/>
            <person name="Reinhard C."/>
            <person name="O'Connell M.J."/>
            <person name="Bowtell D.D.L."/>
        </authorList>
    </citation>
    <scope>INDUCTION</scope>
</reference>
<reference key="8">
    <citation type="journal article" date="2003" name="Mol. Cell. Biol.">
        <title>Generation and analysis of Siah2 mutant mice.</title>
        <authorList>
            <person name="Frew I.J."/>
            <person name="Hammond V.E."/>
            <person name="Dickins R.A."/>
            <person name="Quinn J.M.W."/>
            <person name="Walkley C.R."/>
            <person name="Sims N.A."/>
            <person name="Schnall R."/>
            <person name="Della N.G."/>
            <person name="Holloway A.J."/>
            <person name="Digby M.R."/>
            <person name="Janes P.W."/>
            <person name="Tarlinton D.M."/>
            <person name="Purton L.E."/>
            <person name="Gillespie M.T."/>
            <person name="Bowtell D.D.L."/>
        </authorList>
    </citation>
    <scope>FUNCTION</scope>
</reference>
<reference key="9">
    <citation type="journal article" date="2004" name="J. Biol. Chem.">
        <title>The coiled-coil domain is the structural determinant for mammalian homologues of Drosophila Sina-mediated degradation of promyelocytic leukemia protein and other tripartite motif proteins by the proteasome.</title>
        <authorList>
            <person name="Fanelli M."/>
            <person name="Fantozzi A."/>
            <person name="De Luca P."/>
            <person name="Caprodossi S."/>
            <person name="Matsuzawa S."/>
            <person name="Lazar M.A."/>
            <person name="Pelicci P.G."/>
            <person name="Minucci S."/>
        </authorList>
    </citation>
    <scope>FUNCTION IN DEGRADATION OF PML</scope>
</reference>
<reference key="10">
    <citation type="journal article" date="2006" name="J. Biol. Chem.">
        <title>Regulation of the ring finger E3 ligase Siah2 by p38 MAPK.</title>
        <authorList>
            <person name="Khurana A."/>
            <person name="Nakayama K."/>
            <person name="Williams S."/>
            <person name="Davis R.J."/>
            <person name="Mustelin T."/>
            <person name="Ronai Z."/>
        </authorList>
    </citation>
    <scope>PHOSPHORYLATION AT THR-24 AND SER-29</scope>
    <scope>FUNCTION</scope>
</reference>
<reference key="11">
    <citation type="journal article" date="2014" name="PLoS Genet.">
        <title>Fine tuning of the UPR by the ubiquitin ligases Siah1/2.</title>
        <authorList>
            <person name="Scortegagna M."/>
            <person name="Kim H."/>
            <person name="Li J.L."/>
            <person name="Yao H."/>
            <person name="Brill L.M."/>
            <person name="Han J."/>
            <person name="Lau E."/>
            <person name="Bowtell D."/>
            <person name="Haddad G."/>
            <person name="Kaufman R.J."/>
            <person name="Ronai Z.A."/>
        </authorList>
    </citation>
    <scope>FUNCTION</scope>
    <scope>INDUCTION</scope>
</reference>
<reference key="12">
    <citation type="journal article" date="2015" name="J. Biol. Chem.">
        <title>Exchange factor TBL1 and arginine methyltransferase PRMT6 cooperate in protecting G protein pathway suppressor 2 (GPS2) from proteasomal degradation.</title>
        <authorList>
            <person name="Huang J."/>
            <person name="Cardamone M.D."/>
            <person name="Johnson H.E."/>
            <person name="Neault M."/>
            <person name="Chan M."/>
            <person name="Floyd Z.E."/>
            <person name="Mallette F.A."/>
            <person name="Perissi V."/>
        </authorList>
    </citation>
    <scope>FUNCTION</scope>
    <scope>CATALYTIC ACTIVITY</scope>
</reference>
<reference key="13">
    <citation type="journal article" date="2015" name="Proc. Natl. Acad. Sci. U.S.A.">
        <title>Ubiquitin ligase Siah2 regulates RevErbalpha degradation and the mammalian circadian clock.</title>
        <authorList>
            <person name="DeBruyne J.P."/>
            <person name="Baggs J.E."/>
            <person name="Sato T.K."/>
            <person name="Hogenesch J.B."/>
        </authorList>
    </citation>
    <scope>FUNCTION</scope>
</reference>
<name>SIAH2_MOUSE</name>
<organism>
    <name type="scientific">Mus musculus</name>
    <name type="common">Mouse</name>
    <dbReference type="NCBI Taxonomy" id="10090"/>
    <lineage>
        <taxon>Eukaryota</taxon>
        <taxon>Metazoa</taxon>
        <taxon>Chordata</taxon>
        <taxon>Craniata</taxon>
        <taxon>Vertebrata</taxon>
        <taxon>Euteleostomi</taxon>
        <taxon>Mammalia</taxon>
        <taxon>Eutheria</taxon>
        <taxon>Euarchontoglires</taxon>
        <taxon>Glires</taxon>
        <taxon>Rodentia</taxon>
        <taxon>Myomorpha</taxon>
        <taxon>Muroidea</taxon>
        <taxon>Muridae</taxon>
        <taxon>Murinae</taxon>
        <taxon>Mus</taxon>
        <taxon>Mus</taxon>
    </lineage>
</organism>